<comment type="function">
    <text evidence="1">Required for maturation of 30S ribosomal subunits.</text>
</comment>
<comment type="subcellular location">
    <subcellularLocation>
        <location evidence="1">Cytoplasm</location>
    </subcellularLocation>
</comment>
<comment type="similarity">
    <text evidence="1">Belongs to the RimP family.</text>
</comment>
<gene>
    <name evidence="1" type="primary">rimP</name>
    <name type="ordered locus">Shewana3_1028</name>
</gene>
<dbReference type="EMBL" id="CP000469">
    <property type="protein sequence ID" value="ABK47263.1"/>
    <property type="molecule type" value="Genomic_DNA"/>
</dbReference>
<dbReference type="RefSeq" id="WP_011716141.1">
    <property type="nucleotide sequence ID" value="NC_008577.1"/>
</dbReference>
<dbReference type="SMR" id="A0KTZ4"/>
<dbReference type="STRING" id="94122.Shewana3_1028"/>
<dbReference type="GeneID" id="94727019"/>
<dbReference type="KEGG" id="shn:Shewana3_1028"/>
<dbReference type="eggNOG" id="COG0779">
    <property type="taxonomic scope" value="Bacteria"/>
</dbReference>
<dbReference type="HOGENOM" id="CLU_070525_1_1_6"/>
<dbReference type="OrthoDB" id="9805006at2"/>
<dbReference type="Proteomes" id="UP000002589">
    <property type="component" value="Chromosome"/>
</dbReference>
<dbReference type="GO" id="GO:0005829">
    <property type="term" value="C:cytosol"/>
    <property type="evidence" value="ECO:0007669"/>
    <property type="project" value="TreeGrafter"/>
</dbReference>
<dbReference type="GO" id="GO:0000028">
    <property type="term" value="P:ribosomal small subunit assembly"/>
    <property type="evidence" value="ECO:0007669"/>
    <property type="project" value="TreeGrafter"/>
</dbReference>
<dbReference type="GO" id="GO:0006412">
    <property type="term" value="P:translation"/>
    <property type="evidence" value="ECO:0007669"/>
    <property type="project" value="TreeGrafter"/>
</dbReference>
<dbReference type="CDD" id="cd01734">
    <property type="entry name" value="YlxS_C"/>
    <property type="match status" value="1"/>
</dbReference>
<dbReference type="FunFam" id="2.30.30.180:FF:000001">
    <property type="entry name" value="Ribosome maturation factor RimP"/>
    <property type="match status" value="1"/>
</dbReference>
<dbReference type="FunFam" id="3.30.300.70:FF:000001">
    <property type="entry name" value="Ribosome maturation factor RimP"/>
    <property type="match status" value="1"/>
</dbReference>
<dbReference type="Gene3D" id="2.30.30.180">
    <property type="entry name" value="Ribosome maturation factor RimP, C-terminal domain"/>
    <property type="match status" value="1"/>
</dbReference>
<dbReference type="Gene3D" id="3.30.300.70">
    <property type="entry name" value="RimP-like superfamily, N-terminal"/>
    <property type="match status" value="1"/>
</dbReference>
<dbReference type="HAMAP" id="MF_01077">
    <property type="entry name" value="RimP"/>
    <property type="match status" value="1"/>
</dbReference>
<dbReference type="InterPro" id="IPR003728">
    <property type="entry name" value="Ribosome_maturation_RimP"/>
</dbReference>
<dbReference type="InterPro" id="IPR028998">
    <property type="entry name" value="RimP_C"/>
</dbReference>
<dbReference type="InterPro" id="IPR036847">
    <property type="entry name" value="RimP_C_sf"/>
</dbReference>
<dbReference type="InterPro" id="IPR028989">
    <property type="entry name" value="RimP_N"/>
</dbReference>
<dbReference type="InterPro" id="IPR035956">
    <property type="entry name" value="RimP_N_sf"/>
</dbReference>
<dbReference type="NCBIfam" id="NF000927">
    <property type="entry name" value="PRK00092.1-1"/>
    <property type="match status" value="1"/>
</dbReference>
<dbReference type="PANTHER" id="PTHR33867">
    <property type="entry name" value="RIBOSOME MATURATION FACTOR RIMP"/>
    <property type="match status" value="1"/>
</dbReference>
<dbReference type="PANTHER" id="PTHR33867:SF1">
    <property type="entry name" value="RIBOSOME MATURATION FACTOR RIMP"/>
    <property type="match status" value="1"/>
</dbReference>
<dbReference type="Pfam" id="PF17384">
    <property type="entry name" value="DUF150_C"/>
    <property type="match status" value="1"/>
</dbReference>
<dbReference type="Pfam" id="PF02576">
    <property type="entry name" value="RimP_N"/>
    <property type="match status" value="1"/>
</dbReference>
<dbReference type="SUPFAM" id="SSF74942">
    <property type="entry name" value="YhbC-like, C-terminal domain"/>
    <property type="match status" value="1"/>
</dbReference>
<dbReference type="SUPFAM" id="SSF75420">
    <property type="entry name" value="YhbC-like, N-terminal domain"/>
    <property type="match status" value="1"/>
</dbReference>
<name>RIMP_SHESA</name>
<sequence length="151" mass="16423">MATLESRLADMLKVPVEALGFQLWGIEYVQAGKHSILRVFIDGENGINIEDCANVSRQVSAVLDVEDPISTEYTLEVSSPGVDRPLFTAEQYAAYVGEDVKLQLTMPVAGSRNLKGAITQVDGQMLSLNVNGKELVVALDNIRKGNIIAKF</sequence>
<keyword id="KW-0963">Cytoplasm</keyword>
<keyword id="KW-0690">Ribosome biogenesis</keyword>
<reference key="1">
    <citation type="submission" date="2006-09" db="EMBL/GenBank/DDBJ databases">
        <title>Complete sequence of chromosome 1 of Shewanella sp. ANA-3.</title>
        <authorList>
            <person name="Copeland A."/>
            <person name="Lucas S."/>
            <person name="Lapidus A."/>
            <person name="Barry K."/>
            <person name="Detter J.C."/>
            <person name="Glavina del Rio T."/>
            <person name="Hammon N."/>
            <person name="Israni S."/>
            <person name="Dalin E."/>
            <person name="Tice H."/>
            <person name="Pitluck S."/>
            <person name="Chertkov O."/>
            <person name="Brettin T."/>
            <person name="Bruce D."/>
            <person name="Han C."/>
            <person name="Tapia R."/>
            <person name="Gilna P."/>
            <person name="Schmutz J."/>
            <person name="Larimer F."/>
            <person name="Land M."/>
            <person name="Hauser L."/>
            <person name="Kyrpides N."/>
            <person name="Kim E."/>
            <person name="Newman D."/>
            <person name="Salticov C."/>
            <person name="Konstantinidis K."/>
            <person name="Klappenback J."/>
            <person name="Tiedje J."/>
            <person name="Richardson P."/>
        </authorList>
    </citation>
    <scope>NUCLEOTIDE SEQUENCE [LARGE SCALE GENOMIC DNA]</scope>
    <source>
        <strain>ANA-3</strain>
    </source>
</reference>
<accession>A0KTZ4</accession>
<protein>
    <recommendedName>
        <fullName evidence="1">Ribosome maturation factor RimP</fullName>
    </recommendedName>
</protein>
<proteinExistence type="inferred from homology"/>
<feature type="chain" id="PRO_1000064771" description="Ribosome maturation factor RimP">
    <location>
        <begin position="1"/>
        <end position="151"/>
    </location>
</feature>
<evidence type="ECO:0000255" key="1">
    <source>
        <dbReference type="HAMAP-Rule" id="MF_01077"/>
    </source>
</evidence>
<organism>
    <name type="scientific">Shewanella sp. (strain ANA-3)</name>
    <dbReference type="NCBI Taxonomy" id="94122"/>
    <lineage>
        <taxon>Bacteria</taxon>
        <taxon>Pseudomonadati</taxon>
        <taxon>Pseudomonadota</taxon>
        <taxon>Gammaproteobacteria</taxon>
        <taxon>Alteromonadales</taxon>
        <taxon>Shewanellaceae</taxon>
        <taxon>Shewanella</taxon>
    </lineage>
</organism>